<feature type="chain" id="PRO_0000349480" description="Actin cytoskeleton-regulatory complex protein pan1">
    <location>
        <begin position="1"/>
        <end position="1470"/>
    </location>
</feature>
<feature type="domain" description="EH 1" evidence="3">
    <location>
        <begin position="169"/>
        <end position="257"/>
    </location>
</feature>
<feature type="domain" description="EF-hand 1" evidence="5">
    <location>
        <begin position="201"/>
        <end position="236"/>
    </location>
</feature>
<feature type="domain" description="EH 2" evidence="3">
    <location>
        <begin position="458"/>
        <end position="547"/>
    </location>
</feature>
<feature type="domain" description="EF-hand 2" evidence="5">
    <location>
        <begin position="491"/>
        <end position="526"/>
    </location>
</feature>
<feature type="domain" description="WH2" evidence="4">
    <location>
        <begin position="1437"/>
        <end position="1454"/>
    </location>
</feature>
<feature type="region of interest" description="Disordered" evidence="6">
    <location>
        <begin position="1"/>
        <end position="157"/>
    </location>
</feature>
<feature type="region of interest" description="Disordered" evidence="6">
    <location>
        <begin position="282"/>
        <end position="305"/>
    </location>
</feature>
<feature type="region of interest" description="Disordered" evidence="6">
    <location>
        <begin position="343"/>
        <end position="377"/>
    </location>
</feature>
<feature type="region of interest" description="Disordered" evidence="6">
    <location>
        <begin position="614"/>
        <end position="641"/>
    </location>
</feature>
<feature type="region of interest" description="Disordered" evidence="6">
    <location>
        <begin position="794"/>
        <end position="864"/>
    </location>
</feature>
<feature type="region of interest" description="Disordered" evidence="6">
    <location>
        <begin position="886"/>
        <end position="1087"/>
    </location>
</feature>
<feature type="region of interest" description="Disordered" evidence="6">
    <location>
        <begin position="1099"/>
        <end position="1470"/>
    </location>
</feature>
<feature type="coiled-coil region" evidence="2">
    <location>
        <begin position="633"/>
        <end position="758"/>
    </location>
</feature>
<feature type="coiled-coil region" evidence="2">
    <location>
        <begin position="963"/>
        <end position="1159"/>
    </location>
</feature>
<feature type="compositionally biased region" description="Low complexity" evidence="6">
    <location>
        <begin position="25"/>
        <end position="48"/>
    </location>
</feature>
<feature type="compositionally biased region" description="Polar residues" evidence="6">
    <location>
        <begin position="54"/>
        <end position="75"/>
    </location>
</feature>
<feature type="compositionally biased region" description="Low complexity" evidence="6">
    <location>
        <begin position="77"/>
        <end position="101"/>
    </location>
</feature>
<feature type="compositionally biased region" description="Polar residues" evidence="6">
    <location>
        <begin position="129"/>
        <end position="139"/>
    </location>
</feature>
<feature type="compositionally biased region" description="Pro residues" evidence="6">
    <location>
        <begin position="292"/>
        <end position="301"/>
    </location>
</feature>
<feature type="compositionally biased region" description="Low complexity" evidence="6">
    <location>
        <begin position="348"/>
        <end position="360"/>
    </location>
</feature>
<feature type="compositionally biased region" description="Low complexity" evidence="6">
    <location>
        <begin position="627"/>
        <end position="637"/>
    </location>
</feature>
<feature type="compositionally biased region" description="Basic and acidic residues" evidence="6">
    <location>
        <begin position="809"/>
        <end position="864"/>
    </location>
</feature>
<feature type="compositionally biased region" description="Basic and acidic residues" evidence="6">
    <location>
        <begin position="892"/>
        <end position="910"/>
    </location>
</feature>
<feature type="compositionally biased region" description="Low complexity" evidence="6">
    <location>
        <begin position="917"/>
        <end position="932"/>
    </location>
</feature>
<feature type="compositionally biased region" description="Basic and acidic residues" evidence="6">
    <location>
        <begin position="933"/>
        <end position="951"/>
    </location>
</feature>
<feature type="compositionally biased region" description="Basic and acidic residues" evidence="6">
    <location>
        <begin position="971"/>
        <end position="1006"/>
    </location>
</feature>
<feature type="compositionally biased region" description="Basic and acidic residues" evidence="6">
    <location>
        <begin position="1052"/>
        <end position="1087"/>
    </location>
</feature>
<feature type="compositionally biased region" description="Basic and acidic residues" evidence="6">
    <location>
        <begin position="1099"/>
        <end position="1127"/>
    </location>
</feature>
<feature type="compositionally biased region" description="Basic and acidic residues" evidence="6">
    <location>
        <begin position="1134"/>
        <end position="1146"/>
    </location>
</feature>
<feature type="compositionally biased region" description="Acidic residues" evidence="6">
    <location>
        <begin position="1151"/>
        <end position="1163"/>
    </location>
</feature>
<feature type="compositionally biased region" description="Polar residues" evidence="6">
    <location>
        <begin position="1169"/>
        <end position="1180"/>
    </location>
</feature>
<feature type="compositionally biased region" description="Low complexity" evidence="6">
    <location>
        <begin position="1181"/>
        <end position="1195"/>
    </location>
</feature>
<feature type="compositionally biased region" description="Polar residues" evidence="6">
    <location>
        <begin position="1243"/>
        <end position="1269"/>
    </location>
</feature>
<feature type="compositionally biased region" description="Basic and acidic residues" evidence="6">
    <location>
        <begin position="1277"/>
        <end position="1286"/>
    </location>
</feature>
<feature type="compositionally biased region" description="Polar residues" evidence="6">
    <location>
        <begin position="1340"/>
        <end position="1352"/>
    </location>
</feature>
<feature type="compositionally biased region" description="Pro residues" evidence="6">
    <location>
        <begin position="1367"/>
        <end position="1380"/>
    </location>
</feature>
<feature type="compositionally biased region" description="Pro residues" evidence="6">
    <location>
        <begin position="1389"/>
        <end position="1433"/>
    </location>
</feature>
<feature type="compositionally biased region" description="Polar residues" evidence="6">
    <location>
        <begin position="1457"/>
        <end position="1470"/>
    </location>
</feature>
<evidence type="ECO:0000250" key="1"/>
<evidence type="ECO:0000255" key="2"/>
<evidence type="ECO:0000255" key="3">
    <source>
        <dbReference type="PROSITE-ProRule" id="PRU00077"/>
    </source>
</evidence>
<evidence type="ECO:0000255" key="4">
    <source>
        <dbReference type="PROSITE-ProRule" id="PRU00406"/>
    </source>
</evidence>
<evidence type="ECO:0000255" key="5">
    <source>
        <dbReference type="PROSITE-ProRule" id="PRU00448"/>
    </source>
</evidence>
<evidence type="ECO:0000256" key="6">
    <source>
        <dbReference type="SAM" id="MobiDB-lite"/>
    </source>
</evidence>
<evidence type="ECO:0000305" key="7"/>
<reference key="1">
    <citation type="journal article" date="2008" name="PLoS Genet.">
        <title>Genomic islands in the pathogenic filamentous fungus Aspergillus fumigatus.</title>
        <authorList>
            <person name="Fedorova N.D."/>
            <person name="Khaldi N."/>
            <person name="Joardar V.S."/>
            <person name="Maiti R."/>
            <person name="Amedeo P."/>
            <person name="Anderson M.J."/>
            <person name="Crabtree J."/>
            <person name="Silva J.C."/>
            <person name="Badger J.H."/>
            <person name="Albarraq A."/>
            <person name="Angiuoli S."/>
            <person name="Bussey H."/>
            <person name="Bowyer P."/>
            <person name="Cotty P.J."/>
            <person name="Dyer P.S."/>
            <person name="Egan A."/>
            <person name="Galens K."/>
            <person name="Fraser-Liggett C.M."/>
            <person name="Haas B.J."/>
            <person name="Inman J.M."/>
            <person name="Kent R."/>
            <person name="Lemieux S."/>
            <person name="Malavazi I."/>
            <person name="Orvis J."/>
            <person name="Roemer T."/>
            <person name="Ronning C.M."/>
            <person name="Sundaram J.P."/>
            <person name="Sutton G."/>
            <person name="Turner G."/>
            <person name="Venter J.C."/>
            <person name="White O.R."/>
            <person name="Whitty B.R."/>
            <person name="Youngman P."/>
            <person name="Wolfe K.H."/>
            <person name="Goldman G.H."/>
            <person name="Wortman J.R."/>
            <person name="Jiang B."/>
            <person name="Denning D.W."/>
            <person name="Nierman W.C."/>
        </authorList>
    </citation>
    <scope>NUCLEOTIDE SEQUENCE [LARGE SCALE GENOMIC DNA]</scope>
    <source>
        <strain>ATCC 1020 / DSM 3700 / CBS 544.65 / FGSC A1164 / JCM 1740 / NRRL 181 / WB 181</strain>
    </source>
</reference>
<dbReference type="EMBL" id="DS027695">
    <property type="protein sequence ID" value="EAW19411.1"/>
    <property type="molecule type" value="Genomic_DNA"/>
</dbReference>
<dbReference type="RefSeq" id="XP_001261308.1">
    <property type="nucleotide sequence ID" value="XM_001261307.1"/>
</dbReference>
<dbReference type="SMR" id="A1DC51"/>
<dbReference type="EnsemblFungi" id="EAW19411">
    <property type="protein sequence ID" value="EAW19411"/>
    <property type="gene ID" value="NFIA_024830"/>
</dbReference>
<dbReference type="GeneID" id="4588024"/>
<dbReference type="KEGG" id="nfi:NFIA_024830"/>
<dbReference type="VEuPathDB" id="FungiDB:NFIA_024830"/>
<dbReference type="eggNOG" id="KOG0998">
    <property type="taxonomic scope" value="Eukaryota"/>
</dbReference>
<dbReference type="HOGENOM" id="CLU_001963_1_0_1"/>
<dbReference type="OMA" id="GMPGQWG"/>
<dbReference type="OrthoDB" id="2015333at2759"/>
<dbReference type="Proteomes" id="UP000006702">
    <property type="component" value="Unassembled WGS sequence"/>
</dbReference>
<dbReference type="GO" id="GO:0030479">
    <property type="term" value="C:actin cortical patch"/>
    <property type="evidence" value="ECO:0007669"/>
    <property type="project" value="UniProtKB-SubCell"/>
</dbReference>
<dbReference type="GO" id="GO:0010008">
    <property type="term" value="C:endosome membrane"/>
    <property type="evidence" value="ECO:0007669"/>
    <property type="project" value="UniProtKB-SubCell"/>
</dbReference>
<dbReference type="GO" id="GO:0005886">
    <property type="term" value="C:plasma membrane"/>
    <property type="evidence" value="ECO:0007669"/>
    <property type="project" value="UniProtKB-SubCell"/>
</dbReference>
<dbReference type="GO" id="GO:0003779">
    <property type="term" value="F:actin binding"/>
    <property type="evidence" value="ECO:0007669"/>
    <property type="project" value="UniProtKB-KW"/>
</dbReference>
<dbReference type="GO" id="GO:0005509">
    <property type="term" value="F:calcium ion binding"/>
    <property type="evidence" value="ECO:0007669"/>
    <property type="project" value="InterPro"/>
</dbReference>
<dbReference type="GO" id="GO:0006897">
    <property type="term" value="P:endocytosis"/>
    <property type="evidence" value="ECO:0007669"/>
    <property type="project" value="UniProtKB-KW"/>
</dbReference>
<dbReference type="GO" id="GO:0016197">
    <property type="term" value="P:endosomal transport"/>
    <property type="evidence" value="ECO:0007669"/>
    <property type="project" value="TreeGrafter"/>
</dbReference>
<dbReference type="CDD" id="cd00052">
    <property type="entry name" value="EH"/>
    <property type="match status" value="2"/>
</dbReference>
<dbReference type="FunFam" id="1.10.238.10:FF:000349">
    <property type="entry name" value="Actin cytoskeleton-regulatory complex protein PAN1"/>
    <property type="match status" value="1"/>
</dbReference>
<dbReference type="Gene3D" id="1.10.238.10">
    <property type="entry name" value="EF-hand"/>
    <property type="match status" value="2"/>
</dbReference>
<dbReference type="InterPro" id="IPR013182">
    <property type="entry name" value="DUF1720"/>
</dbReference>
<dbReference type="InterPro" id="IPR011992">
    <property type="entry name" value="EF-hand-dom_pair"/>
</dbReference>
<dbReference type="InterPro" id="IPR002048">
    <property type="entry name" value="EF_hand_dom"/>
</dbReference>
<dbReference type="InterPro" id="IPR000261">
    <property type="entry name" value="EH_dom"/>
</dbReference>
<dbReference type="InterPro" id="IPR003124">
    <property type="entry name" value="WH2_dom"/>
</dbReference>
<dbReference type="PANTHER" id="PTHR11216:SF170">
    <property type="entry name" value="DYNAMIN ASSOCIATED PROTEIN 160, ISOFORM D"/>
    <property type="match status" value="1"/>
</dbReference>
<dbReference type="PANTHER" id="PTHR11216">
    <property type="entry name" value="EH DOMAIN"/>
    <property type="match status" value="1"/>
</dbReference>
<dbReference type="Pfam" id="PF08226">
    <property type="entry name" value="DUF1720"/>
    <property type="match status" value="2"/>
</dbReference>
<dbReference type="Pfam" id="PF12763">
    <property type="entry name" value="EH"/>
    <property type="match status" value="2"/>
</dbReference>
<dbReference type="Pfam" id="PF02205">
    <property type="entry name" value="WH2"/>
    <property type="match status" value="1"/>
</dbReference>
<dbReference type="SMART" id="SM00054">
    <property type="entry name" value="EFh"/>
    <property type="match status" value="2"/>
</dbReference>
<dbReference type="SMART" id="SM00027">
    <property type="entry name" value="EH"/>
    <property type="match status" value="2"/>
</dbReference>
<dbReference type="SUPFAM" id="SSF47473">
    <property type="entry name" value="EF-hand"/>
    <property type="match status" value="2"/>
</dbReference>
<dbReference type="PROSITE" id="PS50222">
    <property type="entry name" value="EF_HAND_2"/>
    <property type="match status" value="2"/>
</dbReference>
<dbReference type="PROSITE" id="PS50031">
    <property type="entry name" value="EH"/>
    <property type="match status" value="2"/>
</dbReference>
<dbReference type="PROSITE" id="PS51082">
    <property type="entry name" value="WH2"/>
    <property type="match status" value="1"/>
</dbReference>
<proteinExistence type="inferred from homology"/>
<name>PAN1_NEOFI</name>
<keyword id="KW-0009">Actin-binding</keyword>
<keyword id="KW-1003">Cell membrane</keyword>
<keyword id="KW-0175">Coiled coil</keyword>
<keyword id="KW-0963">Cytoplasm</keyword>
<keyword id="KW-0206">Cytoskeleton</keyword>
<keyword id="KW-0254">Endocytosis</keyword>
<keyword id="KW-0967">Endosome</keyword>
<keyword id="KW-0472">Membrane</keyword>
<keyword id="KW-1185">Reference proteome</keyword>
<keyword id="KW-0677">Repeat</keyword>
<sequence>MYSSSNSFLGGVNNARPGQPPFMQQPPYSQFPQGQQQIPQQTGFQPQPAGYGPQSASHLQPQPTGFPTGQLQPQFTGFPGAAPQQQQQQLGGYQAPAQQPQFTGYPPQSQPPSLQVPSTTGLPTRLAPRTSSEIANSFSDGAGVAPPPPPKSSGSKIPNIRLSFITAQDQAKFEQLFKSAVGDSQTMDGEKAKELLLRSRLPGSELSKIWVLSDTTKSGQLFFPEFALAMYLCNLRITGRELPATLPDKIKNEVSSMVDIISFGVPDTEPQASARTNVPSFDAPLLENKSAPPAPQHPKPQQPSNAQFLSQLAAQPTGFGPQATGLQPNQPSLLGANAALAPQATGFPGQSQQQYLQPQPTGLMTNPQATGYNGPRPPLPPMPTGFGSNLSSMQTGGLVAQPTGIPGQWGFVNAPSSGLPNIEALKQQLMPQPGREGGFTTAGLSGNASIPWAITKEEKKIYDDLFRAWDGFHKGFIGGDTAIEIMGQSGLDRKDLERIWTLADPNNRGRLNMDEFAVAMHLIYRKLNGYPVPNRLPPELIPPSTRNLNDSIGAVKSLLSQDAENRKASGAFLQPQKTGVSYLKEHSFRGGARSPGFGRKDATLFKNNDEAAAGYRSSARRRMGNDARPSSPAASQASEEELSVEQLKKKIRETQIMLDAVDFNDENRAEEDEVLDRRDRLEAESLMDRTRRVQDDIDTHPNAAFRNLDNGAERRALRRQLQAFEDQVPQVASEVRRIEREIADAKLELFRLKDAKAHPNSAANIVGTGPGGTVTEADRIKARARARMQARAAELAGRPVPASVDDDGAAARRLEAESTSIRADREKNEAMTRDVEESVREFTRSLEDSLKEEGETSTREHERRRWEDALGVEDVIRDFIYDLQRGSRTAHVRKEEESRASEQRLRHEEPSAGVSRLSPAPSAGSAGSLPGSTHEDRVAAARERAQRRIAERMAAAGLKPHTDTSETLLQRQEREKREREERLRQAEEEDAKREQERQRRLAEEQRSTSNAPAKPVGKKPPPAPPSRRGRTDSAGQAEVKKAAEETVTAEQAAREQAIREEQQAQEEETNRLEMEAQQREEELLKEKEAQEARLRALEEQVRQGKIRKQEEKRRKEEAERLAKEKEAALAAQRAEIERAKERERQLQLELEGLDEESSSDDEGPANITPEDSTPTQSQLLPTVTPAAPVSAPESEQAGSPEDTSSQAPPVGFSSETESKNPYFKITHQAADTQVVSPPPAPQPNVTSPRADVHSTNPFHRLAQQESSKPVFTGSAPLERKSRARPEADDDWSAAGSEFDSSDDDDDERPGGGSAKQLASILFGTMAPPRPLSAMDDKSPSKSSTPVQDSPVTSLPVPEPNGSLSAPAAPPPPPPPPPPAAVPSYDSSVAPPPPPAPPMAPPMAPPAPPPGPPPPPGPPPPPAPPAAGGPPTPAGAPDRSALLASIQMGKGLRKVQTNDRSTSSSAGRVLD</sequence>
<protein>
    <recommendedName>
        <fullName>Actin cytoskeleton-regulatory complex protein pan1</fullName>
    </recommendedName>
</protein>
<gene>
    <name type="primary">pan1</name>
    <name type="ORF">NFIA_024830</name>
</gene>
<comment type="function">
    <text evidence="1">Component of the PAN1 actin cytoskeleton-regulatory complex required for the internalization of endosomes during actin-coupled endocytosis. The complex links the site of endocytosis to the cell membrane-associated actin cytoskeleton. Mediates uptake of external molecules and vacuolar degradation of plasma membrane proteins. Plays a role in the proper organization of the cell membrane-associated actin cytoskeleton and promotes its destabilization (By similarity).</text>
</comment>
<comment type="subunit">
    <text evidence="1">Component of the PAN1 actin cytoskeleton-regulatory complex.</text>
</comment>
<comment type="subcellular location">
    <subcellularLocation>
        <location evidence="1">Cell membrane</location>
        <topology evidence="1">Peripheral membrane protein</topology>
        <orientation evidence="1">Cytoplasmic side</orientation>
    </subcellularLocation>
    <subcellularLocation>
        <location evidence="1">Endosome membrane</location>
        <topology evidence="1">Peripheral membrane protein</topology>
        <orientation evidence="1">Cytoplasmic side</orientation>
    </subcellularLocation>
    <subcellularLocation>
        <location evidence="1">Cytoplasm</location>
        <location evidence="1">Cytoskeleton</location>
        <location evidence="1">Actin patch</location>
    </subcellularLocation>
    <text evidence="1">Cytoplasmic and cortical actin patches.</text>
</comment>
<comment type="similarity">
    <text evidence="7">Belongs to the PAN1 family.</text>
</comment>
<organism>
    <name type="scientific">Neosartorya fischeri (strain ATCC 1020 / DSM 3700 / CBS 544.65 / FGSC A1164 / JCM 1740 / NRRL 181 / WB 181)</name>
    <name type="common">Aspergillus fischerianus</name>
    <dbReference type="NCBI Taxonomy" id="331117"/>
    <lineage>
        <taxon>Eukaryota</taxon>
        <taxon>Fungi</taxon>
        <taxon>Dikarya</taxon>
        <taxon>Ascomycota</taxon>
        <taxon>Pezizomycotina</taxon>
        <taxon>Eurotiomycetes</taxon>
        <taxon>Eurotiomycetidae</taxon>
        <taxon>Eurotiales</taxon>
        <taxon>Aspergillaceae</taxon>
        <taxon>Aspergillus</taxon>
        <taxon>Aspergillus subgen. Fumigati</taxon>
    </lineage>
</organism>
<accession>A1DC51</accession>